<protein>
    <recommendedName>
        <fullName>Protein FAM171B</fullName>
    </recommendedName>
</protein>
<comment type="subcellular location">
    <subcellularLocation>
        <location evidence="1">Cytoplasmic granule</location>
    </subcellularLocation>
    <subcellularLocation>
        <location evidence="6">Membrane</location>
        <topology evidence="6">Single-pass type I membrane protein</topology>
    </subcellularLocation>
    <text evidence="1">In neurons, localizes to vesicular-like puncta in the cytoplasm.</text>
</comment>
<comment type="alternative products">
    <event type="alternative splicing"/>
    <isoform>
        <id>Q6P995-1</id>
        <name>1</name>
        <sequence type="displayed"/>
    </isoform>
    <isoform>
        <id>Q6P995-2</id>
        <name>2</name>
        <sequence type="described" ref="VSP_040122 VSP_040123"/>
    </isoform>
</comment>
<comment type="similarity">
    <text evidence="6">Belongs to the FAM171 family.</text>
</comment>
<comment type="sequence caution" evidence="6">
    <conflict type="frameshift">
        <sequence resource="EMBL-CDS" id="AAL57220"/>
    </conflict>
</comment>
<comment type="sequence caution" evidence="6">
    <conflict type="erroneous initiation">
        <sequence resource="EMBL-CDS" id="BAC04380"/>
    </conflict>
    <text>Truncated N-terminus.</text>
</comment>
<comment type="sequence caution" evidence="6">
    <conflict type="erroneous initiation">
        <sequence resource="EMBL-CDS" id="BAC04586"/>
    </conflict>
    <text>Truncated N-terminus.</text>
</comment>
<evidence type="ECO:0000250" key="1">
    <source>
        <dbReference type="UniProtKB" id="Q14CH0"/>
    </source>
</evidence>
<evidence type="ECO:0000255" key="2"/>
<evidence type="ECO:0000256" key="3">
    <source>
        <dbReference type="SAM" id="MobiDB-lite"/>
    </source>
</evidence>
<evidence type="ECO:0000269" key="4">
    <source>
    </source>
</evidence>
<evidence type="ECO:0000303" key="5">
    <source>
    </source>
</evidence>
<evidence type="ECO:0000305" key="6"/>
<gene>
    <name type="primary">FAM171B</name>
    <name type="synonym">KIAA1946</name>
    <name type="ORF">NPD019</name>
</gene>
<sequence>MARLCRRVPCTLLLGLAVVLLKARLVPAAARAELSRSDLSLIQQQQQQQQQQQQQQKQLEEAEEERTEVPGATSTLTVPVSVFMLKVQVNDIISRQYLSQAVVEVFVNYTKTNSTVTKSNGAVLIKVPYKLGLSLTIIAYKDGYVLTPLPWKTRRMPIYSSVTLSLFPQSQANIWLFEDTVLITGKLADAKSQPSVQFSKALIKLPDNHHISNVTGYLTVLQQFLKVDNFLHTTGITLNKPGFENIELTPLAAICVKIYSGGKELKVNGSIQVSLPLLRLNDISAGDRIPAWTFDMNTGAWVNHGRGMVKEHNNHLIWTYDAPHLGYWIAAPLPGTRGSGINEDSKDITAYHTVFLTAILGGTIVIVIGFFAVLLCYCRDKCGTPQKRERNITKLEVLKRDQTTSTTHINHISTVKVALKAEDKSQLFNAKNSSYSPQKKEPSKAETEERVSMVKTRDDFKIYNEDVSFLSVNQNNYSRNPTQSLEPNVGSKQPKHINNNLSSSLGDAQDEKRYLTGNEEAYGRSHIPEQLMHIYSQPIAILQTSDLFSTPEQLHTAKSATLPRKGQLVYGQLMEPVNRENFTQTLPKMPIHSHAQPPDAREEDIILEGQQSLPSQASDWSRYSSSLLESVSVPGTLNEAVVMTPFSSELQGISEQTLLELSKGKPSPHPRAWFVSLDGKPVAQVRHSFIDLKKGKRTQSNDTSLDSGVDMNELHSSRKLEREKTFIKSMHQPKILYLEDLDLSSSESGTTVCSPEDPALRHILDGGSGVIMEHPGEESPGRKSTVEDFEANTSPTKRRGRPPLAKRDSKTNIWKKREERPLIPIN</sequence>
<dbReference type="EMBL" id="AK091423">
    <property type="protein sequence ID" value="BAC03660.1"/>
    <property type="molecule type" value="mRNA"/>
</dbReference>
<dbReference type="EMBL" id="AK094578">
    <property type="protein sequence ID" value="BAC04380.1"/>
    <property type="status" value="ALT_INIT"/>
    <property type="molecule type" value="mRNA"/>
</dbReference>
<dbReference type="EMBL" id="AK095604">
    <property type="protein sequence ID" value="BAC04586.1"/>
    <property type="status" value="ALT_INIT"/>
    <property type="molecule type" value="mRNA"/>
</dbReference>
<dbReference type="EMBL" id="AC017101">
    <property type="protein sequence ID" value="AAY24258.1"/>
    <property type="molecule type" value="Genomic_DNA"/>
</dbReference>
<dbReference type="EMBL" id="BC060872">
    <property type="protein sequence ID" value="AAH60872.1"/>
    <property type="molecule type" value="mRNA"/>
</dbReference>
<dbReference type="EMBL" id="AF361495">
    <property type="protein sequence ID" value="AAL57220.1"/>
    <property type="status" value="ALT_FRAME"/>
    <property type="molecule type" value="mRNA"/>
</dbReference>
<dbReference type="EMBL" id="AB075826">
    <property type="protein sequence ID" value="BAB85532.1"/>
    <property type="molecule type" value="mRNA"/>
</dbReference>
<dbReference type="EMBL" id="AL834264">
    <property type="protein sequence ID" value="CAD38939.1"/>
    <property type="molecule type" value="mRNA"/>
</dbReference>
<dbReference type="CCDS" id="CCDS33347.1">
    <molecule id="Q6P995-1"/>
</dbReference>
<dbReference type="RefSeq" id="NP_803237.3">
    <molecule id="Q6P995-1"/>
    <property type="nucleotide sequence ID" value="NM_177454.3"/>
</dbReference>
<dbReference type="BioGRID" id="127911">
    <property type="interactions" value="58"/>
</dbReference>
<dbReference type="FunCoup" id="Q6P995">
    <property type="interactions" value="514"/>
</dbReference>
<dbReference type="IntAct" id="Q6P995">
    <property type="interactions" value="22"/>
</dbReference>
<dbReference type="MINT" id="Q6P995"/>
<dbReference type="STRING" id="9606.ENSP00000304108"/>
<dbReference type="GlyCosmos" id="Q6P995">
    <property type="glycosylation" value="4 sites, No reported glycans"/>
</dbReference>
<dbReference type="GlyGen" id="Q6P995">
    <property type="glycosylation" value="4 sites, 1 N-linked glycan (1 site)"/>
</dbReference>
<dbReference type="iPTMnet" id="Q6P995"/>
<dbReference type="PhosphoSitePlus" id="Q6P995"/>
<dbReference type="BioMuta" id="FAM171B"/>
<dbReference type="DMDM" id="313104238"/>
<dbReference type="jPOST" id="Q6P995"/>
<dbReference type="MassIVE" id="Q6P995"/>
<dbReference type="PaxDb" id="9606-ENSP00000304108"/>
<dbReference type="PeptideAtlas" id="Q6P995"/>
<dbReference type="ProteomicsDB" id="67026">
    <molecule id="Q6P995-1"/>
</dbReference>
<dbReference type="ProteomicsDB" id="67027">
    <molecule id="Q6P995-2"/>
</dbReference>
<dbReference type="Pumba" id="Q6P995"/>
<dbReference type="Antibodypedia" id="2501">
    <property type="antibodies" value="46 antibodies from 10 providers"/>
</dbReference>
<dbReference type="DNASU" id="165215"/>
<dbReference type="Ensembl" id="ENST00000304698.10">
    <molecule id="Q6P995-1"/>
    <property type="protein sequence ID" value="ENSP00000304108.5"/>
    <property type="gene ID" value="ENSG00000144369.14"/>
</dbReference>
<dbReference type="GeneID" id="165215"/>
<dbReference type="KEGG" id="hsa:165215"/>
<dbReference type="MANE-Select" id="ENST00000304698.10">
    <property type="protein sequence ID" value="ENSP00000304108.5"/>
    <property type="RefSeq nucleotide sequence ID" value="NM_177454.4"/>
    <property type="RefSeq protein sequence ID" value="NP_803237.3"/>
</dbReference>
<dbReference type="UCSC" id="uc002upt.4">
    <molecule id="Q6P995-1"/>
    <property type="organism name" value="human"/>
</dbReference>
<dbReference type="AGR" id="HGNC:29412"/>
<dbReference type="CTD" id="165215"/>
<dbReference type="DisGeNET" id="165215"/>
<dbReference type="GeneCards" id="FAM171B"/>
<dbReference type="HGNC" id="HGNC:29412">
    <property type="gene designation" value="FAM171B"/>
</dbReference>
<dbReference type="HPA" id="ENSG00000144369">
    <property type="expression patterns" value="Tissue enhanced (brain)"/>
</dbReference>
<dbReference type="MIM" id="620309">
    <property type="type" value="gene"/>
</dbReference>
<dbReference type="neXtProt" id="NX_Q6P995"/>
<dbReference type="OpenTargets" id="ENSG00000144369"/>
<dbReference type="PharmGKB" id="PA162387220"/>
<dbReference type="VEuPathDB" id="HostDB:ENSG00000144369"/>
<dbReference type="eggNOG" id="ENOG502QRHY">
    <property type="taxonomic scope" value="Eukaryota"/>
</dbReference>
<dbReference type="GeneTree" id="ENSGT00950000183184"/>
<dbReference type="HOGENOM" id="CLU_019729_0_1_1"/>
<dbReference type="InParanoid" id="Q6P995"/>
<dbReference type="OMA" id="WIAAPHP"/>
<dbReference type="OrthoDB" id="8950207at2759"/>
<dbReference type="PAN-GO" id="Q6P995">
    <property type="GO annotations" value="0 GO annotations based on evolutionary models"/>
</dbReference>
<dbReference type="PhylomeDB" id="Q6P995"/>
<dbReference type="TreeFam" id="TF331338"/>
<dbReference type="PathwayCommons" id="Q6P995"/>
<dbReference type="SignaLink" id="Q6P995"/>
<dbReference type="BioGRID-ORCS" id="165215">
    <property type="hits" value="22 hits in 1154 CRISPR screens"/>
</dbReference>
<dbReference type="ChiTaRS" id="FAM171B">
    <property type="organism name" value="human"/>
</dbReference>
<dbReference type="GenomeRNAi" id="165215"/>
<dbReference type="Pharos" id="Q6P995">
    <property type="development level" value="Tdark"/>
</dbReference>
<dbReference type="PRO" id="PR:Q6P995"/>
<dbReference type="Proteomes" id="UP000005640">
    <property type="component" value="Chromosome 2"/>
</dbReference>
<dbReference type="RNAct" id="Q6P995">
    <property type="molecule type" value="protein"/>
</dbReference>
<dbReference type="Bgee" id="ENSG00000144369">
    <property type="expression patterns" value="Expressed in entorhinal cortex and 169 other cell types or tissues"/>
</dbReference>
<dbReference type="ExpressionAtlas" id="Q6P995">
    <property type="expression patterns" value="baseline and differential"/>
</dbReference>
<dbReference type="GO" id="GO:0016020">
    <property type="term" value="C:membrane"/>
    <property type="evidence" value="ECO:0007669"/>
    <property type="project" value="UniProtKB-SubCell"/>
</dbReference>
<dbReference type="GO" id="GO:0045202">
    <property type="term" value="C:synapse"/>
    <property type="evidence" value="ECO:0007669"/>
    <property type="project" value="Ensembl"/>
</dbReference>
<dbReference type="InterPro" id="IPR018890">
    <property type="entry name" value="FAM171"/>
</dbReference>
<dbReference type="InterPro" id="IPR049175">
    <property type="entry name" value="FAM171_C"/>
</dbReference>
<dbReference type="InterPro" id="IPR048530">
    <property type="entry name" value="FAM171_N"/>
</dbReference>
<dbReference type="PANTHER" id="PTHR31626:SF2">
    <property type="entry name" value="PROTEIN FAM171B"/>
    <property type="match status" value="1"/>
</dbReference>
<dbReference type="PANTHER" id="PTHR31626">
    <property type="entry name" value="SUSHI DOMAIN-CONTAINING PROTEIN"/>
    <property type="match status" value="1"/>
</dbReference>
<dbReference type="Pfam" id="PF20771">
    <property type="entry name" value="FAM171A1-2-B_C"/>
    <property type="match status" value="1"/>
</dbReference>
<dbReference type="Pfam" id="PF10577">
    <property type="entry name" value="FAM171A1-2-B_N"/>
    <property type="match status" value="1"/>
</dbReference>
<reference key="1">
    <citation type="journal article" date="2004" name="Nat. Genet.">
        <title>Complete sequencing and characterization of 21,243 full-length human cDNAs.</title>
        <authorList>
            <person name="Ota T."/>
            <person name="Suzuki Y."/>
            <person name="Nishikawa T."/>
            <person name="Otsuki T."/>
            <person name="Sugiyama T."/>
            <person name="Irie R."/>
            <person name="Wakamatsu A."/>
            <person name="Hayashi K."/>
            <person name="Sato H."/>
            <person name="Nagai K."/>
            <person name="Kimura K."/>
            <person name="Makita H."/>
            <person name="Sekine M."/>
            <person name="Obayashi M."/>
            <person name="Nishi T."/>
            <person name="Shibahara T."/>
            <person name="Tanaka T."/>
            <person name="Ishii S."/>
            <person name="Yamamoto J."/>
            <person name="Saito K."/>
            <person name="Kawai Y."/>
            <person name="Isono Y."/>
            <person name="Nakamura Y."/>
            <person name="Nagahari K."/>
            <person name="Murakami K."/>
            <person name="Yasuda T."/>
            <person name="Iwayanagi T."/>
            <person name="Wagatsuma M."/>
            <person name="Shiratori A."/>
            <person name="Sudo H."/>
            <person name="Hosoiri T."/>
            <person name="Kaku Y."/>
            <person name="Kodaira H."/>
            <person name="Kondo H."/>
            <person name="Sugawara M."/>
            <person name="Takahashi M."/>
            <person name="Kanda K."/>
            <person name="Yokoi T."/>
            <person name="Furuya T."/>
            <person name="Kikkawa E."/>
            <person name="Omura Y."/>
            <person name="Abe K."/>
            <person name="Kamihara K."/>
            <person name="Katsuta N."/>
            <person name="Sato K."/>
            <person name="Tanikawa M."/>
            <person name="Yamazaki M."/>
            <person name="Ninomiya K."/>
            <person name="Ishibashi T."/>
            <person name="Yamashita H."/>
            <person name="Murakawa K."/>
            <person name="Fujimori K."/>
            <person name="Tanai H."/>
            <person name="Kimata M."/>
            <person name="Watanabe M."/>
            <person name="Hiraoka S."/>
            <person name="Chiba Y."/>
            <person name="Ishida S."/>
            <person name="Ono Y."/>
            <person name="Takiguchi S."/>
            <person name="Watanabe S."/>
            <person name="Yosida M."/>
            <person name="Hotuta T."/>
            <person name="Kusano J."/>
            <person name="Kanehori K."/>
            <person name="Takahashi-Fujii A."/>
            <person name="Hara H."/>
            <person name="Tanase T.-O."/>
            <person name="Nomura Y."/>
            <person name="Togiya S."/>
            <person name="Komai F."/>
            <person name="Hara R."/>
            <person name="Takeuchi K."/>
            <person name="Arita M."/>
            <person name="Imose N."/>
            <person name="Musashino K."/>
            <person name="Yuuki H."/>
            <person name="Oshima A."/>
            <person name="Sasaki N."/>
            <person name="Aotsuka S."/>
            <person name="Yoshikawa Y."/>
            <person name="Matsunawa H."/>
            <person name="Ichihara T."/>
            <person name="Shiohata N."/>
            <person name="Sano S."/>
            <person name="Moriya S."/>
            <person name="Momiyama H."/>
            <person name="Satoh N."/>
            <person name="Takami S."/>
            <person name="Terashima Y."/>
            <person name="Suzuki O."/>
            <person name="Nakagawa S."/>
            <person name="Senoh A."/>
            <person name="Mizoguchi H."/>
            <person name="Goto Y."/>
            <person name="Shimizu F."/>
            <person name="Wakebe H."/>
            <person name="Hishigaki H."/>
            <person name="Watanabe T."/>
            <person name="Sugiyama A."/>
            <person name="Takemoto M."/>
            <person name="Kawakami B."/>
            <person name="Yamazaki M."/>
            <person name="Watanabe K."/>
            <person name="Kumagai A."/>
            <person name="Itakura S."/>
            <person name="Fukuzumi Y."/>
            <person name="Fujimori Y."/>
            <person name="Komiyama M."/>
            <person name="Tashiro H."/>
            <person name="Tanigami A."/>
            <person name="Fujiwara T."/>
            <person name="Ono T."/>
            <person name="Yamada K."/>
            <person name="Fujii Y."/>
            <person name="Ozaki K."/>
            <person name="Hirao M."/>
            <person name="Ohmori Y."/>
            <person name="Kawabata A."/>
            <person name="Hikiji T."/>
            <person name="Kobatake N."/>
            <person name="Inagaki H."/>
            <person name="Ikema Y."/>
            <person name="Okamoto S."/>
            <person name="Okitani R."/>
            <person name="Kawakami T."/>
            <person name="Noguchi S."/>
            <person name="Itoh T."/>
            <person name="Shigeta K."/>
            <person name="Senba T."/>
            <person name="Matsumura K."/>
            <person name="Nakajima Y."/>
            <person name="Mizuno T."/>
            <person name="Morinaga M."/>
            <person name="Sasaki M."/>
            <person name="Togashi T."/>
            <person name="Oyama M."/>
            <person name="Hata H."/>
            <person name="Watanabe M."/>
            <person name="Komatsu T."/>
            <person name="Mizushima-Sugano J."/>
            <person name="Satoh T."/>
            <person name="Shirai Y."/>
            <person name="Takahashi Y."/>
            <person name="Nakagawa K."/>
            <person name="Okumura K."/>
            <person name="Nagase T."/>
            <person name="Nomura N."/>
            <person name="Kikuchi H."/>
            <person name="Masuho Y."/>
            <person name="Yamashita R."/>
            <person name="Nakai K."/>
            <person name="Yada T."/>
            <person name="Nakamura Y."/>
            <person name="Ohara O."/>
            <person name="Isogai T."/>
            <person name="Sugano S."/>
        </authorList>
    </citation>
    <scope>NUCLEOTIDE SEQUENCE [LARGE SCALE MRNA] (ISOFORM 2)</scope>
    <scope>NUCLEOTIDE SEQUENCE [LARGE SCALE MRNA] OF 203-826 (ISOFORM 1)</scope>
    <source>
        <tissue>Amygdala</tissue>
        <tissue>Brain</tissue>
    </source>
</reference>
<reference key="2">
    <citation type="journal article" date="2005" name="Nature">
        <title>Generation and annotation of the DNA sequences of human chromosomes 2 and 4.</title>
        <authorList>
            <person name="Hillier L.W."/>
            <person name="Graves T.A."/>
            <person name="Fulton R.S."/>
            <person name="Fulton L.A."/>
            <person name="Pepin K.H."/>
            <person name="Minx P."/>
            <person name="Wagner-McPherson C."/>
            <person name="Layman D."/>
            <person name="Wylie K."/>
            <person name="Sekhon M."/>
            <person name="Becker M.C."/>
            <person name="Fewell G.A."/>
            <person name="Delehaunty K.D."/>
            <person name="Miner T.L."/>
            <person name="Nash W.E."/>
            <person name="Kremitzki C."/>
            <person name="Oddy L."/>
            <person name="Du H."/>
            <person name="Sun H."/>
            <person name="Bradshaw-Cordum H."/>
            <person name="Ali J."/>
            <person name="Carter J."/>
            <person name="Cordes M."/>
            <person name="Harris A."/>
            <person name="Isak A."/>
            <person name="van Brunt A."/>
            <person name="Nguyen C."/>
            <person name="Du F."/>
            <person name="Courtney L."/>
            <person name="Kalicki J."/>
            <person name="Ozersky P."/>
            <person name="Abbott S."/>
            <person name="Armstrong J."/>
            <person name="Belter E.A."/>
            <person name="Caruso L."/>
            <person name="Cedroni M."/>
            <person name="Cotton M."/>
            <person name="Davidson T."/>
            <person name="Desai A."/>
            <person name="Elliott G."/>
            <person name="Erb T."/>
            <person name="Fronick C."/>
            <person name="Gaige T."/>
            <person name="Haakenson W."/>
            <person name="Haglund K."/>
            <person name="Holmes A."/>
            <person name="Harkins R."/>
            <person name="Kim K."/>
            <person name="Kruchowski S.S."/>
            <person name="Strong C.M."/>
            <person name="Grewal N."/>
            <person name="Goyea E."/>
            <person name="Hou S."/>
            <person name="Levy A."/>
            <person name="Martinka S."/>
            <person name="Mead K."/>
            <person name="McLellan M.D."/>
            <person name="Meyer R."/>
            <person name="Randall-Maher J."/>
            <person name="Tomlinson C."/>
            <person name="Dauphin-Kohlberg S."/>
            <person name="Kozlowicz-Reilly A."/>
            <person name="Shah N."/>
            <person name="Swearengen-Shahid S."/>
            <person name="Snider J."/>
            <person name="Strong J.T."/>
            <person name="Thompson J."/>
            <person name="Yoakum M."/>
            <person name="Leonard S."/>
            <person name="Pearman C."/>
            <person name="Trani L."/>
            <person name="Radionenko M."/>
            <person name="Waligorski J.E."/>
            <person name="Wang C."/>
            <person name="Rock S.M."/>
            <person name="Tin-Wollam A.-M."/>
            <person name="Maupin R."/>
            <person name="Latreille P."/>
            <person name="Wendl M.C."/>
            <person name="Yang S.-P."/>
            <person name="Pohl C."/>
            <person name="Wallis J.W."/>
            <person name="Spieth J."/>
            <person name="Bieri T.A."/>
            <person name="Berkowicz N."/>
            <person name="Nelson J.O."/>
            <person name="Osborne J."/>
            <person name="Ding L."/>
            <person name="Meyer R."/>
            <person name="Sabo A."/>
            <person name="Shotland Y."/>
            <person name="Sinha P."/>
            <person name="Wohldmann P.E."/>
            <person name="Cook L.L."/>
            <person name="Hickenbotham M.T."/>
            <person name="Eldred J."/>
            <person name="Williams D."/>
            <person name="Jones T.A."/>
            <person name="She X."/>
            <person name="Ciccarelli F.D."/>
            <person name="Izaurralde E."/>
            <person name="Taylor J."/>
            <person name="Schmutz J."/>
            <person name="Myers R.M."/>
            <person name="Cox D.R."/>
            <person name="Huang X."/>
            <person name="McPherson J.D."/>
            <person name="Mardis E.R."/>
            <person name="Clifton S.W."/>
            <person name="Warren W.C."/>
            <person name="Chinwalla A.T."/>
            <person name="Eddy S.R."/>
            <person name="Marra M.A."/>
            <person name="Ovcharenko I."/>
            <person name="Furey T.S."/>
            <person name="Miller W."/>
            <person name="Eichler E.E."/>
            <person name="Bork P."/>
            <person name="Suyama M."/>
            <person name="Torrents D."/>
            <person name="Waterston R.H."/>
            <person name="Wilson R.K."/>
        </authorList>
    </citation>
    <scope>NUCLEOTIDE SEQUENCE [LARGE SCALE GENOMIC DNA]</scope>
</reference>
<reference key="3">
    <citation type="journal article" date="2004" name="Genome Res.">
        <title>The status, quality, and expansion of the NIH full-length cDNA project: the Mammalian Gene Collection (MGC).</title>
        <authorList>
            <consortium name="The MGC Project Team"/>
        </authorList>
    </citation>
    <scope>NUCLEOTIDE SEQUENCE [LARGE SCALE MRNA] (ISOFORM 1)</scope>
    <scope>VARIANT ILE-302</scope>
    <source>
        <tissue>Placenta</tissue>
    </source>
</reference>
<reference key="4">
    <citation type="submission" date="2001-03" db="EMBL/GenBank/DDBJ databases">
        <title>A novel gene expressed in human normal pituitary.</title>
        <authorList>
            <person name="Liu F."/>
            <person name="Xu X.R."/>
            <person name="Qian B.Z."/>
            <person name="Xiao H."/>
            <person name="Chen Z."/>
            <person name="Han Z."/>
        </authorList>
    </citation>
    <scope>NUCLEOTIDE SEQUENCE [LARGE SCALE MRNA] OF 1-281</scope>
    <source>
        <tissue>Pituitary</tissue>
    </source>
</reference>
<reference key="5">
    <citation type="journal article" date="2001" name="DNA Res.">
        <title>Prediction of the coding sequences of unidentified human genes. XXII. The complete sequences of 50 new cDNA clones which code for large proteins.</title>
        <authorList>
            <person name="Nagase T."/>
            <person name="Kikuno R."/>
            <person name="Ohara O."/>
        </authorList>
    </citation>
    <scope>NUCLEOTIDE SEQUENCE [LARGE SCALE MRNA] OF 148-826 (ISOFORM 1)</scope>
    <source>
        <tissue>Brain</tissue>
    </source>
</reference>
<reference key="6">
    <citation type="journal article" date="2007" name="BMC Genomics">
        <title>The full-ORF clone resource of the German cDNA consortium.</title>
        <authorList>
            <person name="Bechtel S."/>
            <person name="Rosenfelder H."/>
            <person name="Duda A."/>
            <person name="Schmidt C.P."/>
            <person name="Ernst U."/>
            <person name="Wellenreuther R."/>
            <person name="Mehrle A."/>
            <person name="Schuster C."/>
            <person name="Bahr A."/>
            <person name="Bloecker H."/>
            <person name="Heubner D."/>
            <person name="Hoerlein A."/>
            <person name="Michel G."/>
            <person name="Wedler H."/>
            <person name="Koehrer K."/>
            <person name="Ottenwaelder B."/>
            <person name="Poustka A."/>
            <person name="Wiemann S."/>
            <person name="Schupp I."/>
        </authorList>
    </citation>
    <scope>NUCLEOTIDE SEQUENCE [LARGE SCALE MRNA] OF 497-826 (ISOFORM 1)</scope>
    <source>
        <tissue>Amygdala</tissue>
    </source>
</reference>
<name>F171B_HUMAN</name>
<keyword id="KW-0025">Alternative splicing</keyword>
<keyword id="KW-0325">Glycoprotein</keyword>
<keyword id="KW-0472">Membrane</keyword>
<keyword id="KW-0597">Phosphoprotein</keyword>
<keyword id="KW-1267">Proteomics identification</keyword>
<keyword id="KW-1185">Reference proteome</keyword>
<keyword id="KW-0732">Signal</keyword>
<keyword id="KW-0812">Transmembrane</keyword>
<keyword id="KW-1133">Transmembrane helix</keyword>
<feature type="signal peptide" evidence="2">
    <location>
        <begin position="1"/>
        <end position="32"/>
    </location>
</feature>
<feature type="chain" id="PRO_0000287148" description="Protein FAM171B">
    <location>
        <begin position="33"/>
        <end position="826"/>
    </location>
</feature>
<feature type="topological domain" description="Extracellular" evidence="2">
    <location>
        <begin position="33"/>
        <end position="353"/>
    </location>
</feature>
<feature type="transmembrane region" description="Helical" evidence="2">
    <location>
        <begin position="354"/>
        <end position="374"/>
    </location>
</feature>
<feature type="topological domain" description="Cytoplasmic" evidence="2">
    <location>
        <begin position="375"/>
        <end position="826"/>
    </location>
</feature>
<feature type="region of interest" description="Disordered" evidence="3">
    <location>
        <begin position="52"/>
        <end position="71"/>
    </location>
</feature>
<feature type="region of interest" description="Disordered" evidence="3">
    <location>
        <begin position="429"/>
        <end position="448"/>
    </location>
</feature>
<feature type="region of interest" description="Disordered" evidence="3">
    <location>
        <begin position="474"/>
        <end position="493"/>
    </location>
</feature>
<feature type="region of interest" description="Disordered" evidence="3">
    <location>
        <begin position="774"/>
        <end position="826"/>
    </location>
</feature>
<feature type="compositionally biased region" description="Basic and acidic residues" evidence="3">
    <location>
        <begin position="438"/>
        <end position="448"/>
    </location>
</feature>
<feature type="compositionally biased region" description="Polar residues" evidence="3">
    <location>
        <begin position="474"/>
        <end position="486"/>
    </location>
</feature>
<feature type="compositionally biased region" description="Basic and acidic residues" evidence="3">
    <location>
        <begin position="774"/>
        <end position="786"/>
    </location>
</feature>
<feature type="compositionally biased region" description="Basic and acidic residues" evidence="3">
    <location>
        <begin position="805"/>
        <end position="826"/>
    </location>
</feature>
<feature type="modified residue" description="Phosphoserine" evidence="1">
    <location>
        <position position="794"/>
    </location>
</feature>
<feature type="glycosylation site" description="N-linked (GlcNAc...) asparagine" evidence="2">
    <location>
        <position position="108"/>
    </location>
</feature>
<feature type="glycosylation site" description="N-linked (GlcNAc...) asparagine" evidence="2">
    <location>
        <position position="113"/>
    </location>
</feature>
<feature type="glycosylation site" description="N-linked (GlcNAc...) asparagine" evidence="2">
    <location>
        <position position="213"/>
    </location>
</feature>
<feature type="glycosylation site" description="N-linked (GlcNAc...) asparagine" evidence="2">
    <location>
        <position position="268"/>
    </location>
</feature>
<feature type="splice variant" id="VSP_040122" description="In isoform 2." evidence="5">
    <original>STVKVALKAEDKSQL</original>
    <variation>RNRRKSFHGKNSGRF</variation>
    <location>
        <begin position="413"/>
        <end position="427"/>
    </location>
</feature>
<feature type="splice variant" id="VSP_040123" description="In isoform 2." evidence="5">
    <location>
        <begin position="428"/>
        <end position="826"/>
    </location>
</feature>
<feature type="sequence variant" id="VAR_032269" description="In dbSNP:rs17855085." evidence="4">
    <original>V</original>
    <variation>I</variation>
    <location>
        <position position="302"/>
    </location>
</feature>
<feature type="sequence conflict" description="In Ref. 1; BAC03660." evidence="6" ref="1">
    <original>I</original>
    <variation>IQ</variation>
    <location>
        <position position="42"/>
    </location>
</feature>
<feature type="sequence conflict" description="In Ref. 3; AAH60872 and 4; AAL57220." evidence="6" ref="3 4">
    <original>I</original>
    <variation>IQQ</variation>
    <location>
        <position position="42"/>
    </location>
</feature>
<feature type="sequence conflict" description="In Ref. 4; AAL57220." evidence="6" ref="4">
    <original>K</original>
    <variation>R</variation>
    <location>
        <position position="266"/>
    </location>
</feature>
<feature type="sequence conflict" description="In Ref. 1; BAC04380." evidence="6" ref="1">
    <original>F</original>
    <variation>Y</variation>
    <location>
        <position position="689"/>
    </location>
</feature>
<proteinExistence type="evidence at protein level"/>
<organism>
    <name type="scientific">Homo sapiens</name>
    <name type="common">Human</name>
    <dbReference type="NCBI Taxonomy" id="9606"/>
    <lineage>
        <taxon>Eukaryota</taxon>
        <taxon>Metazoa</taxon>
        <taxon>Chordata</taxon>
        <taxon>Craniata</taxon>
        <taxon>Vertebrata</taxon>
        <taxon>Euteleostomi</taxon>
        <taxon>Mammalia</taxon>
        <taxon>Eutheria</taxon>
        <taxon>Euarchontoglires</taxon>
        <taxon>Primates</taxon>
        <taxon>Haplorrhini</taxon>
        <taxon>Catarrhini</taxon>
        <taxon>Hominidae</taxon>
        <taxon>Homo</taxon>
    </lineage>
</organism>
<accession>Q6P995</accession>
<accession>Q53SK3</accession>
<accession>Q8N1Y4</accession>
<accession>Q8N3K1</accession>
<accession>Q8N970</accession>
<accession>Q8NB81</accession>
<accession>Q8TF55</accession>
<accession>Q8WYR8</accession>